<accession>Q6G1S0</accession>
<reference key="1">
    <citation type="journal article" date="2004" name="Proc. Natl. Acad. Sci. U.S.A.">
        <title>The louse-borne human pathogen Bartonella quintana is a genomic derivative of the zoonotic agent Bartonella henselae.</title>
        <authorList>
            <person name="Alsmark U.C.M."/>
            <person name="Frank A.C."/>
            <person name="Karlberg E.O."/>
            <person name="Legault B.-A."/>
            <person name="Ardell D.H."/>
            <person name="Canbaeck B."/>
            <person name="Eriksson A.-S."/>
            <person name="Naeslund A.K."/>
            <person name="Handley S.A."/>
            <person name="Huvet M."/>
            <person name="La Scola B."/>
            <person name="Holmberg M."/>
            <person name="Andersson S.G.E."/>
        </authorList>
    </citation>
    <scope>NUCLEOTIDE SEQUENCE [LARGE SCALE GENOMIC DNA]</scope>
    <source>
        <strain>ATCC 49882 / DSM 28221 / CCUG 30454 / Houston 1</strain>
    </source>
</reference>
<comment type="function">
    <text evidence="1">This protein is located at the 30S-50S ribosomal subunit interface and may play a role in the structure and function of the aminoacyl-tRNA binding site.</text>
</comment>
<comment type="similarity">
    <text evidence="1">Belongs to the bacterial ribosomal protein bL19 family.</text>
</comment>
<dbReference type="EMBL" id="BX897699">
    <property type="protein sequence ID" value="CAF28344.1"/>
    <property type="molecule type" value="Genomic_DNA"/>
</dbReference>
<dbReference type="RefSeq" id="WP_011181347.1">
    <property type="nucleotide sequence ID" value="NZ_LRIJ02000001.1"/>
</dbReference>
<dbReference type="SMR" id="Q6G1S0"/>
<dbReference type="PaxDb" id="283166-BH15810"/>
<dbReference type="EnsemblBacteria" id="CAF28344">
    <property type="protein sequence ID" value="CAF28344"/>
    <property type="gene ID" value="BH15810"/>
</dbReference>
<dbReference type="GeneID" id="92986202"/>
<dbReference type="KEGG" id="bhe:BH15810"/>
<dbReference type="eggNOG" id="COG0335">
    <property type="taxonomic scope" value="Bacteria"/>
</dbReference>
<dbReference type="OrthoDB" id="9803541at2"/>
<dbReference type="Proteomes" id="UP000000421">
    <property type="component" value="Chromosome"/>
</dbReference>
<dbReference type="GO" id="GO:0022625">
    <property type="term" value="C:cytosolic large ribosomal subunit"/>
    <property type="evidence" value="ECO:0007669"/>
    <property type="project" value="TreeGrafter"/>
</dbReference>
<dbReference type="GO" id="GO:0003735">
    <property type="term" value="F:structural constituent of ribosome"/>
    <property type="evidence" value="ECO:0007669"/>
    <property type="project" value="InterPro"/>
</dbReference>
<dbReference type="GO" id="GO:0006412">
    <property type="term" value="P:translation"/>
    <property type="evidence" value="ECO:0007669"/>
    <property type="project" value="UniProtKB-UniRule"/>
</dbReference>
<dbReference type="FunFam" id="2.30.30.790:FF:000001">
    <property type="entry name" value="50S ribosomal protein L19"/>
    <property type="match status" value="1"/>
</dbReference>
<dbReference type="Gene3D" id="2.30.30.790">
    <property type="match status" value="1"/>
</dbReference>
<dbReference type="HAMAP" id="MF_00402">
    <property type="entry name" value="Ribosomal_bL19"/>
    <property type="match status" value="1"/>
</dbReference>
<dbReference type="InterPro" id="IPR001857">
    <property type="entry name" value="Ribosomal_bL19"/>
</dbReference>
<dbReference type="InterPro" id="IPR018257">
    <property type="entry name" value="Ribosomal_bL19_CS"/>
</dbReference>
<dbReference type="InterPro" id="IPR038657">
    <property type="entry name" value="Ribosomal_bL19_sf"/>
</dbReference>
<dbReference type="InterPro" id="IPR008991">
    <property type="entry name" value="Translation_prot_SH3-like_sf"/>
</dbReference>
<dbReference type="NCBIfam" id="TIGR01024">
    <property type="entry name" value="rplS_bact"/>
    <property type="match status" value="1"/>
</dbReference>
<dbReference type="PANTHER" id="PTHR15680:SF9">
    <property type="entry name" value="LARGE RIBOSOMAL SUBUNIT PROTEIN BL19M"/>
    <property type="match status" value="1"/>
</dbReference>
<dbReference type="PANTHER" id="PTHR15680">
    <property type="entry name" value="RIBOSOMAL PROTEIN L19"/>
    <property type="match status" value="1"/>
</dbReference>
<dbReference type="Pfam" id="PF01245">
    <property type="entry name" value="Ribosomal_L19"/>
    <property type="match status" value="1"/>
</dbReference>
<dbReference type="PIRSF" id="PIRSF002191">
    <property type="entry name" value="Ribosomal_L19"/>
    <property type="match status" value="1"/>
</dbReference>
<dbReference type="PRINTS" id="PR00061">
    <property type="entry name" value="RIBOSOMALL19"/>
</dbReference>
<dbReference type="SUPFAM" id="SSF50104">
    <property type="entry name" value="Translation proteins SH3-like domain"/>
    <property type="match status" value="1"/>
</dbReference>
<dbReference type="PROSITE" id="PS01015">
    <property type="entry name" value="RIBOSOMAL_L19"/>
    <property type="match status" value="1"/>
</dbReference>
<keyword id="KW-0687">Ribonucleoprotein</keyword>
<keyword id="KW-0689">Ribosomal protein</keyword>
<protein>
    <recommendedName>
        <fullName evidence="1">Large ribosomal subunit protein bL19</fullName>
    </recommendedName>
    <alternativeName>
        <fullName evidence="2">50S ribosomal protein L19</fullName>
    </alternativeName>
</protein>
<sequence length="146" mass="16398">MNIIAQLEAEQCAKIAAKRQLPAFQPGDTVRVMVRVTEGTRTRVQAYEGVCIARSGGGLNETFTVRKISYGEGVERVFPVYSPLIEGVELVRRGKVRRAKLYYLRNLRGKAARITEKKDQRKKSAKIVEKEQEALVRVEAPAHATE</sequence>
<gene>
    <name evidence="1" type="primary">rplS</name>
    <name type="ordered locus">BH15810</name>
</gene>
<proteinExistence type="inferred from homology"/>
<name>RL19_BARHE</name>
<organism>
    <name type="scientific">Bartonella henselae (strain ATCC 49882 / DSM 28221 / CCUG 30454 / Houston 1)</name>
    <name type="common">Rochalimaea henselae</name>
    <dbReference type="NCBI Taxonomy" id="283166"/>
    <lineage>
        <taxon>Bacteria</taxon>
        <taxon>Pseudomonadati</taxon>
        <taxon>Pseudomonadota</taxon>
        <taxon>Alphaproteobacteria</taxon>
        <taxon>Hyphomicrobiales</taxon>
        <taxon>Bartonellaceae</taxon>
        <taxon>Bartonella</taxon>
    </lineage>
</organism>
<evidence type="ECO:0000255" key="1">
    <source>
        <dbReference type="HAMAP-Rule" id="MF_00402"/>
    </source>
</evidence>
<evidence type="ECO:0000305" key="2"/>
<feature type="chain" id="PRO_0000163415" description="Large ribosomal subunit protein bL19">
    <location>
        <begin position="1"/>
        <end position="146"/>
    </location>
</feature>